<keyword id="KW-0150">Chloroplast</keyword>
<keyword id="KW-0472">Membrane</keyword>
<keyword id="KW-0520">NAD</keyword>
<keyword id="KW-0521">NADP</keyword>
<keyword id="KW-0934">Plastid</keyword>
<keyword id="KW-0618">Plastoquinone</keyword>
<keyword id="KW-0874">Quinone</keyword>
<keyword id="KW-0793">Thylakoid</keyword>
<keyword id="KW-1278">Translocase</keyword>
<keyword id="KW-0812">Transmembrane</keyword>
<keyword id="KW-1133">Transmembrane helix</keyword>
<keyword id="KW-0813">Transport</keyword>
<reference key="1">
    <citation type="submission" date="2006-01" db="EMBL/GenBank/DDBJ databases">
        <title>A comparison of the first two published chloroplast genomes in Asteraceae: Lactuca and Helianthus.</title>
        <authorList>
            <person name="Timme R.E."/>
            <person name="Kuehl J.V."/>
            <person name="Boore J.L."/>
            <person name="Jansen R.K."/>
        </authorList>
    </citation>
    <scope>NUCLEOTIDE SEQUENCE [LARGE SCALE GENOMIC DNA]</scope>
    <source>
        <strain>cv. HA383</strain>
    </source>
</reference>
<accession>P0CC71</accession>
<accession>Q1KXP7</accession>
<dbReference type="EC" id="7.1.1.-" evidence="1"/>
<dbReference type="EMBL" id="DQ383815">
    <property type="protein sequence ID" value="ABD47208.1"/>
    <property type="molecule type" value="Genomic_DNA"/>
</dbReference>
<dbReference type="SMR" id="P0CC71"/>
<dbReference type="KEGG" id="han:4055600"/>
<dbReference type="KEGG" id="han:4055649"/>
<dbReference type="OrthoDB" id="1876953at2759"/>
<dbReference type="GO" id="GO:0009535">
    <property type="term" value="C:chloroplast thylakoid membrane"/>
    <property type="evidence" value="ECO:0007669"/>
    <property type="project" value="UniProtKB-SubCell"/>
</dbReference>
<dbReference type="GO" id="GO:0008137">
    <property type="term" value="F:NADH dehydrogenase (ubiquinone) activity"/>
    <property type="evidence" value="ECO:0007669"/>
    <property type="project" value="InterPro"/>
</dbReference>
<dbReference type="GO" id="GO:0048038">
    <property type="term" value="F:quinone binding"/>
    <property type="evidence" value="ECO:0007669"/>
    <property type="project" value="UniProtKB-KW"/>
</dbReference>
<dbReference type="GO" id="GO:0042773">
    <property type="term" value="P:ATP synthesis coupled electron transport"/>
    <property type="evidence" value="ECO:0007669"/>
    <property type="project" value="InterPro"/>
</dbReference>
<dbReference type="GO" id="GO:0019684">
    <property type="term" value="P:photosynthesis, light reaction"/>
    <property type="evidence" value="ECO:0007669"/>
    <property type="project" value="UniProtKB-UniRule"/>
</dbReference>
<dbReference type="HAMAP" id="MF_00445">
    <property type="entry name" value="NDH1_NuoN_1"/>
    <property type="match status" value="1"/>
</dbReference>
<dbReference type="InterPro" id="IPR010096">
    <property type="entry name" value="NADH-Q_OxRdtase_suN/2"/>
</dbReference>
<dbReference type="InterPro" id="IPR001750">
    <property type="entry name" value="ND/Mrp_TM"/>
</dbReference>
<dbReference type="InterPro" id="IPR045693">
    <property type="entry name" value="Ndh2_N"/>
</dbReference>
<dbReference type="NCBIfam" id="TIGR01770">
    <property type="entry name" value="NDH_I_N"/>
    <property type="match status" value="1"/>
</dbReference>
<dbReference type="NCBIfam" id="NF002701">
    <property type="entry name" value="PRK02504.1"/>
    <property type="match status" value="1"/>
</dbReference>
<dbReference type="PANTHER" id="PTHR22773">
    <property type="entry name" value="NADH DEHYDROGENASE"/>
    <property type="match status" value="1"/>
</dbReference>
<dbReference type="Pfam" id="PF19530">
    <property type="entry name" value="Ndh2_N"/>
    <property type="match status" value="1"/>
</dbReference>
<dbReference type="Pfam" id="PF00361">
    <property type="entry name" value="Proton_antipo_M"/>
    <property type="match status" value="1"/>
</dbReference>
<dbReference type="PRINTS" id="PR01434">
    <property type="entry name" value="NADHDHGNASE5"/>
</dbReference>
<gene>
    <name evidence="1" type="primary">ndhB2</name>
</gene>
<organism>
    <name type="scientific">Helianthus annuus</name>
    <name type="common">Common sunflower</name>
    <dbReference type="NCBI Taxonomy" id="4232"/>
    <lineage>
        <taxon>Eukaryota</taxon>
        <taxon>Viridiplantae</taxon>
        <taxon>Streptophyta</taxon>
        <taxon>Embryophyta</taxon>
        <taxon>Tracheophyta</taxon>
        <taxon>Spermatophyta</taxon>
        <taxon>Magnoliopsida</taxon>
        <taxon>eudicotyledons</taxon>
        <taxon>Gunneridae</taxon>
        <taxon>Pentapetalae</taxon>
        <taxon>asterids</taxon>
        <taxon>campanulids</taxon>
        <taxon>Asterales</taxon>
        <taxon>Asteraceae</taxon>
        <taxon>Asteroideae</taxon>
        <taxon>Heliantheae alliance</taxon>
        <taxon>Heliantheae</taxon>
        <taxon>Helianthus</taxon>
    </lineage>
</organism>
<protein>
    <recommendedName>
        <fullName evidence="1">NAD(P)H-quinone oxidoreductase subunit 2 B, chloroplastic</fullName>
        <ecNumber evidence="1">7.1.1.-</ecNumber>
    </recommendedName>
    <alternativeName>
        <fullName evidence="1">NAD(P)H dehydrogenase, subunit 2 B</fullName>
    </alternativeName>
    <alternativeName>
        <fullName evidence="1">NADH-plastoquinone oxidoreductase subunit 2 B</fullName>
    </alternativeName>
</protein>
<feature type="chain" id="PRO_0000391273" description="NAD(P)H-quinone oxidoreductase subunit 2 B, chloroplastic">
    <location>
        <begin position="1"/>
        <end position="510"/>
    </location>
</feature>
<feature type="transmembrane region" description="Helical" evidence="1">
    <location>
        <begin position="24"/>
        <end position="44"/>
    </location>
</feature>
<feature type="transmembrane region" description="Helical" evidence="1">
    <location>
        <begin position="57"/>
        <end position="77"/>
    </location>
</feature>
<feature type="transmembrane region" description="Helical" evidence="1">
    <location>
        <begin position="99"/>
        <end position="119"/>
    </location>
</feature>
<feature type="transmembrane region" description="Helical" evidence="1">
    <location>
        <begin position="124"/>
        <end position="144"/>
    </location>
</feature>
<feature type="transmembrane region" description="Helical" evidence="1">
    <location>
        <begin position="149"/>
        <end position="169"/>
    </location>
</feature>
<feature type="transmembrane region" description="Helical" evidence="1">
    <location>
        <begin position="183"/>
        <end position="203"/>
    </location>
</feature>
<feature type="transmembrane region" description="Helical" evidence="1">
    <location>
        <begin position="227"/>
        <end position="247"/>
    </location>
</feature>
<feature type="transmembrane region" description="Helical" evidence="1">
    <location>
        <begin position="295"/>
        <end position="315"/>
    </location>
</feature>
<feature type="transmembrane region" description="Helical" evidence="1">
    <location>
        <begin position="323"/>
        <end position="343"/>
    </location>
</feature>
<feature type="transmembrane region" description="Helical" evidence="1">
    <location>
        <begin position="354"/>
        <end position="374"/>
    </location>
</feature>
<feature type="transmembrane region" description="Helical" evidence="1">
    <location>
        <begin position="395"/>
        <end position="415"/>
    </location>
</feature>
<feature type="transmembrane region" description="Helical" evidence="1">
    <location>
        <begin position="418"/>
        <end position="438"/>
    </location>
</feature>
<feature type="transmembrane region" description="Helical" evidence="1">
    <location>
        <begin position="484"/>
        <end position="504"/>
    </location>
</feature>
<name>NU2C2_HELAN</name>
<geneLocation type="chloroplast"/>
<sequence>MIWHVQNENFILDSTRIFMKAFHLLLFDGSLIFPECILIFGLILLLMIDSTSDQKDIPWLYFISSTSLVMSITALLFRWREEPMISFSGNFQTNNFNEIFQFLILLCSTLCIPLSVEYIECTEMAITEFLLFILTATIGGMFLCGANDLITIFVAPECFSLCSYLLSGYTKKDVRSNEATMKYLLMGGASSSILVHGFSWLYGSSGGEIELQEIVNGLINTQMYNSPGISIALIFITVGIGFKLSPAPSHQWTPDVYEGSPTPVVAFLSVTSKVAASASATRIFDIPFYFSSNEWHLLLEILAILSMILGNLIAITQTSMKRMLAYSSIGQIGYVIIGIIVGDSNDGYASMITYMLFYISMNLGTFACIVLFGLRTGTENIRDYAGLYTKDPFLALSLALCLLSLGGLPPLAGFFGKLYLFWCGWQAGLYLLVLIGLLTSVVSIYYYLKIIKLLMTGRNQEITPHVRNYRRSPLRSNNSIELSMIVCVIASTIPGISMNPIIAIAQDTLF</sequence>
<evidence type="ECO:0000255" key="1">
    <source>
        <dbReference type="HAMAP-Rule" id="MF_00445"/>
    </source>
</evidence>
<comment type="function">
    <text evidence="1">NDH shuttles electrons from NAD(P)H:plastoquinone, via FMN and iron-sulfur (Fe-S) centers, to quinones in the photosynthetic chain and possibly in a chloroplast respiratory chain. The immediate electron acceptor for the enzyme in this species is believed to be plastoquinone. Couples the redox reaction to proton translocation, and thus conserves the redox energy in a proton gradient.</text>
</comment>
<comment type="catalytic activity">
    <reaction evidence="1">
        <text>a plastoquinone + NADH + (n+1) H(+)(in) = a plastoquinol + NAD(+) + n H(+)(out)</text>
        <dbReference type="Rhea" id="RHEA:42608"/>
        <dbReference type="Rhea" id="RHEA-COMP:9561"/>
        <dbReference type="Rhea" id="RHEA-COMP:9562"/>
        <dbReference type="ChEBI" id="CHEBI:15378"/>
        <dbReference type="ChEBI" id="CHEBI:17757"/>
        <dbReference type="ChEBI" id="CHEBI:57540"/>
        <dbReference type="ChEBI" id="CHEBI:57945"/>
        <dbReference type="ChEBI" id="CHEBI:62192"/>
    </reaction>
</comment>
<comment type="catalytic activity">
    <reaction evidence="1">
        <text>a plastoquinone + NADPH + (n+1) H(+)(in) = a plastoquinol + NADP(+) + n H(+)(out)</text>
        <dbReference type="Rhea" id="RHEA:42612"/>
        <dbReference type="Rhea" id="RHEA-COMP:9561"/>
        <dbReference type="Rhea" id="RHEA-COMP:9562"/>
        <dbReference type="ChEBI" id="CHEBI:15378"/>
        <dbReference type="ChEBI" id="CHEBI:17757"/>
        <dbReference type="ChEBI" id="CHEBI:57783"/>
        <dbReference type="ChEBI" id="CHEBI:58349"/>
        <dbReference type="ChEBI" id="CHEBI:62192"/>
    </reaction>
</comment>
<comment type="subunit">
    <text evidence="1">NDH is composed of at least 16 different subunits, 5 of which are encoded in the nucleus.</text>
</comment>
<comment type="subcellular location">
    <subcellularLocation>
        <location evidence="1">Plastid</location>
        <location evidence="1">Chloroplast thylakoid membrane</location>
        <topology evidence="1">Multi-pass membrane protein</topology>
    </subcellularLocation>
</comment>
<comment type="similarity">
    <text evidence="1">Belongs to the complex I subunit 2 family.</text>
</comment>
<proteinExistence type="inferred from homology"/>